<keyword id="KW-0007">Acetylation</keyword>
<keyword id="KW-1185">Reference proteome</keyword>
<keyword id="KW-0687">Ribonucleoprotein</keyword>
<keyword id="KW-0689">Ribosomal protein</keyword>
<keyword id="KW-0694">RNA-binding</keyword>
<keyword id="KW-0699">rRNA-binding</keyword>
<evidence type="ECO:0000255" key="1">
    <source>
        <dbReference type="HAMAP-Rule" id="MF_00362"/>
    </source>
</evidence>
<evidence type="ECO:0000305" key="2"/>
<sequence length="165" mass="17712">MALNLQDKQAIVAEVSEVAKGALSAVVADSRGVTVDKMTELRKAGREAGVYMRVVRNTLLRRAVEGTPFECLKDAFVGPTLIAYSMEHPGAAARLFKEFAKANAKFEVKAAAFEGELIPASQIDRLATLPTYEEAIARLMATMKEASAGKLVRTLAAVRDAKEAA</sequence>
<protein>
    <recommendedName>
        <fullName evidence="1">Large ribosomal subunit protein uL10</fullName>
    </recommendedName>
    <alternativeName>
        <fullName evidence="2">50S ribosomal protein L10</fullName>
    </alternativeName>
</protein>
<organism>
    <name type="scientific">Escherichia coli O139:H28 (strain E24377A / ETEC)</name>
    <dbReference type="NCBI Taxonomy" id="331111"/>
    <lineage>
        <taxon>Bacteria</taxon>
        <taxon>Pseudomonadati</taxon>
        <taxon>Pseudomonadota</taxon>
        <taxon>Gammaproteobacteria</taxon>
        <taxon>Enterobacterales</taxon>
        <taxon>Enterobacteriaceae</taxon>
        <taxon>Escherichia</taxon>
    </lineage>
</organism>
<dbReference type="EMBL" id="CP000800">
    <property type="protein sequence ID" value="ABV18710.1"/>
    <property type="molecule type" value="Genomic_DNA"/>
</dbReference>
<dbReference type="RefSeq" id="WP_001207201.1">
    <property type="nucleotide sequence ID" value="NC_009801.1"/>
</dbReference>
<dbReference type="SMR" id="A7ZUJ8"/>
<dbReference type="GeneID" id="93777909"/>
<dbReference type="KEGG" id="ecw:EcE24377A_4525"/>
<dbReference type="HOGENOM" id="CLU_092227_0_2_6"/>
<dbReference type="Proteomes" id="UP000001122">
    <property type="component" value="Chromosome"/>
</dbReference>
<dbReference type="GO" id="GO:0015934">
    <property type="term" value="C:large ribosomal subunit"/>
    <property type="evidence" value="ECO:0007669"/>
    <property type="project" value="InterPro"/>
</dbReference>
<dbReference type="GO" id="GO:0070180">
    <property type="term" value="F:large ribosomal subunit rRNA binding"/>
    <property type="evidence" value="ECO:0007669"/>
    <property type="project" value="UniProtKB-UniRule"/>
</dbReference>
<dbReference type="GO" id="GO:0003735">
    <property type="term" value="F:structural constituent of ribosome"/>
    <property type="evidence" value="ECO:0007669"/>
    <property type="project" value="InterPro"/>
</dbReference>
<dbReference type="GO" id="GO:0006412">
    <property type="term" value="P:translation"/>
    <property type="evidence" value="ECO:0007669"/>
    <property type="project" value="UniProtKB-UniRule"/>
</dbReference>
<dbReference type="CDD" id="cd05797">
    <property type="entry name" value="Ribosomal_L10"/>
    <property type="match status" value="1"/>
</dbReference>
<dbReference type="FunFam" id="3.30.70.1730:FF:000001">
    <property type="entry name" value="50S ribosomal protein L10"/>
    <property type="match status" value="1"/>
</dbReference>
<dbReference type="Gene3D" id="3.30.70.1730">
    <property type="match status" value="1"/>
</dbReference>
<dbReference type="Gene3D" id="6.10.250.2350">
    <property type="match status" value="1"/>
</dbReference>
<dbReference type="HAMAP" id="MF_00362">
    <property type="entry name" value="Ribosomal_uL10"/>
    <property type="match status" value="1"/>
</dbReference>
<dbReference type="InterPro" id="IPR001790">
    <property type="entry name" value="Ribosomal_uL10"/>
</dbReference>
<dbReference type="InterPro" id="IPR043141">
    <property type="entry name" value="Ribosomal_uL10-like_sf"/>
</dbReference>
<dbReference type="InterPro" id="IPR022973">
    <property type="entry name" value="Ribosomal_uL10_bac"/>
</dbReference>
<dbReference type="InterPro" id="IPR047865">
    <property type="entry name" value="Ribosomal_uL10_bac_type"/>
</dbReference>
<dbReference type="InterPro" id="IPR002363">
    <property type="entry name" value="Ribosomal_uL10_CS_bac"/>
</dbReference>
<dbReference type="NCBIfam" id="NF000955">
    <property type="entry name" value="PRK00099.1-1"/>
    <property type="match status" value="1"/>
</dbReference>
<dbReference type="PANTHER" id="PTHR11560">
    <property type="entry name" value="39S RIBOSOMAL PROTEIN L10, MITOCHONDRIAL"/>
    <property type="match status" value="1"/>
</dbReference>
<dbReference type="Pfam" id="PF00466">
    <property type="entry name" value="Ribosomal_L10"/>
    <property type="match status" value="1"/>
</dbReference>
<dbReference type="SUPFAM" id="SSF160369">
    <property type="entry name" value="Ribosomal protein L10-like"/>
    <property type="match status" value="1"/>
</dbReference>
<dbReference type="PROSITE" id="PS01109">
    <property type="entry name" value="RIBOSOMAL_L10"/>
    <property type="match status" value="1"/>
</dbReference>
<comment type="function">
    <text evidence="1">Forms part of the ribosomal stalk, playing a central role in the interaction of the ribosome with GTP-bound translation factors.</text>
</comment>
<comment type="subunit">
    <text evidence="1">Part of the ribosomal stalk of the 50S ribosomal subunit. The N-terminus interacts with L11 and the large rRNA to form the base of the stalk. The C-terminus forms an elongated spine to which L12 dimers bind in a sequential fashion forming a multimeric L10(L12)X complex.</text>
</comment>
<comment type="similarity">
    <text evidence="1">Belongs to the universal ribosomal protein uL10 family.</text>
</comment>
<accession>A7ZUJ8</accession>
<proteinExistence type="inferred from homology"/>
<gene>
    <name evidence="1" type="primary">rplJ</name>
    <name type="ordered locus">EcE24377A_4525</name>
</gene>
<reference key="1">
    <citation type="journal article" date="2008" name="J. Bacteriol.">
        <title>The pangenome structure of Escherichia coli: comparative genomic analysis of E. coli commensal and pathogenic isolates.</title>
        <authorList>
            <person name="Rasko D.A."/>
            <person name="Rosovitz M.J."/>
            <person name="Myers G.S.A."/>
            <person name="Mongodin E.F."/>
            <person name="Fricke W.F."/>
            <person name="Gajer P."/>
            <person name="Crabtree J."/>
            <person name="Sebaihia M."/>
            <person name="Thomson N.R."/>
            <person name="Chaudhuri R."/>
            <person name="Henderson I.R."/>
            <person name="Sperandio V."/>
            <person name="Ravel J."/>
        </authorList>
    </citation>
    <scope>NUCLEOTIDE SEQUENCE [LARGE SCALE GENOMIC DNA]</scope>
    <source>
        <strain>E24377A / ETEC</strain>
    </source>
</reference>
<name>RL10_ECO24</name>
<feature type="chain" id="PRO_1000059886" description="Large ribosomal subunit protein uL10">
    <location>
        <begin position="1"/>
        <end position="165"/>
    </location>
</feature>
<feature type="modified residue" description="N6-acetyllysine" evidence="1">
    <location>
        <position position="37"/>
    </location>
</feature>
<feature type="modified residue" description="N6-acetyllysine" evidence="1">
    <location>
        <position position="105"/>
    </location>
</feature>